<reference key="1">
    <citation type="journal article" date="1991" name="Peptides">
        <title>Isolation and characterization of galanin from sheep brain.</title>
        <authorList>
            <person name="Sillard R."/>
            <person name="Langel U."/>
            <person name="Joernvall H."/>
        </authorList>
    </citation>
    <scope>PROTEIN SEQUENCE</scope>
    <scope>AMIDATION AT ALA-29</scope>
    <source>
        <tissue>Brain</tissue>
    </source>
</reference>
<name>GALA_SHEEP</name>
<comment type="function">
    <text>Contracts smooth muscle of the gastrointestinal and genitourinary tract, regulates growth hormone release, modulates insulin release, and may be involved in the control of adrenal secretion.</text>
</comment>
<comment type="subcellular location">
    <subcellularLocation>
        <location>Secreted</location>
    </subcellularLocation>
</comment>
<comment type="similarity">
    <text evidence="2">Belongs to the galanin family.</text>
</comment>
<gene>
    <name type="primary">GAL</name>
    <name type="synonym">GALN</name>
    <name type="synonym">GLNN</name>
</gene>
<evidence type="ECO:0000269" key="1">
    <source>
    </source>
</evidence>
<evidence type="ECO:0000305" key="2"/>
<keyword id="KW-0027">Amidation</keyword>
<keyword id="KW-0903">Direct protein sequencing</keyword>
<keyword id="KW-0372">Hormone</keyword>
<keyword id="KW-0527">Neuropeptide</keyword>
<keyword id="KW-1185">Reference proteome</keyword>
<keyword id="KW-0964">Secreted</keyword>
<accession>P31234</accession>
<protein>
    <recommendedName>
        <fullName>Galanin</fullName>
    </recommendedName>
</protein>
<dbReference type="STRING" id="9940.ENSOARP00000017178"/>
<dbReference type="PaxDb" id="9940-ENSOARP00000017178"/>
<dbReference type="eggNOG" id="ENOG502RZ1E">
    <property type="taxonomic scope" value="Eukaryota"/>
</dbReference>
<dbReference type="Proteomes" id="UP000002356">
    <property type="component" value="Unplaced"/>
</dbReference>
<dbReference type="GO" id="GO:0005615">
    <property type="term" value="C:extracellular space"/>
    <property type="evidence" value="ECO:0007669"/>
    <property type="project" value="TreeGrafter"/>
</dbReference>
<dbReference type="GO" id="GO:0030141">
    <property type="term" value="C:secretory granule"/>
    <property type="evidence" value="ECO:0007669"/>
    <property type="project" value="TreeGrafter"/>
</dbReference>
<dbReference type="GO" id="GO:0031763">
    <property type="term" value="F:galanin receptor binding"/>
    <property type="evidence" value="ECO:0007669"/>
    <property type="project" value="TreeGrafter"/>
</dbReference>
<dbReference type="GO" id="GO:0005184">
    <property type="term" value="F:neuropeptide hormone activity"/>
    <property type="evidence" value="ECO:0007669"/>
    <property type="project" value="TreeGrafter"/>
</dbReference>
<dbReference type="GO" id="GO:0007218">
    <property type="term" value="P:neuropeptide signaling pathway"/>
    <property type="evidence" value="ECO:0007669"/>
    <property type="project" value="UniProtKB-KW"/>
</dbReference>
<dbReference type="InterPro" id="IPR008174">
    <property type="entry name" value="Galanin"/>
</dbReference>
<dbReference type="InterPro" id="IPR008175">
    <property type="entry name" value="Galanin_pre"/>
</dbReference>
<dbReference type="PANTHER" id="PTHR16839">
    <property type="entry name" value="GALANIN"/>
    <property type="match status" value="1"/>
</dbReference>
<dbReference type="PANTHER" id="PTHR16839:SF1">
    <property type="entry name" value="GALANIN PEPTIDES"/>
    <property type="match status" value="1"/>
</dbReference>
<dbReference type="Pfam" id="PF01296">
    <property type="entry name" value="Galanin"/>
    <property type="match status" value="1"/>
</dbReference>
<dbReference type="PRINTS" id="PR00273">
    <property type="entry name" value="GALANIN"/>
</dbReference>
<dbReference type="PROSITE" id="PS00861">
    <property type="entry name" value="GALANIN"/>
    <property type="match status" value="1"/>
</dbReference>
<sequence length="29" mass="3186">GWTLNSAGYLLGPHAIDNHRSFHDKHGLA</sequence>
<feature type="peptide" id="PRO_0000043872" description="Galanin">
    <location>
        <begin position="1"/>
        <end position="29"/>
    </location>
</feature>
<feature type="modified residue" description="Alanine amide" evidence="1">
    <location>
        <position position="29"/>
    </location>
</feature>
<proteinExistence type="evidence at protein level"/>
<organism>
    <name type="scientific">Ovis aries</name>
    <name type="common">Sheep</name>
    <dbReference type="NCBI Taxonomy" id="9940"/>
    <lineage>
        <taxon>Eukaryota</taxon>
        <taxon>Metazoa</taxon>
        <taxon>Chordata</taxon>
        <taxon>Craniata</taxon>
        <taxon>Vertebrata</taxon>
        <taxon>Euteleostomi</taxon>
        <taxon>Mammalia</taxon>
        <taxon>Eutheria</taxon>
        <taxon>Laurasiatheria</taxon>
        <taxon>Artiodactyla</taxon>
        <taxon>Ruminantia</taxon>
        <taxon>Pecora</taxon>
        <taxon>Bovidae</taxon>
        <taxon>Caprinae</taxon>
        <taxon>Ovis</taxon>
    </lineage>
</organism>